<proteinExistence type="evidence at transcript level"/>
<protein>
    <recommendedName>
        <fullName>CD59 glycoprotein</fullName>
    </recommendedName>
    <alternativeName>
        <fullName>MAC-inhibitory protein</fullName>
        <shortName>MAC-IP</shortName>
    </alternativeName>
    <alternativeName>
        <fullName>Membrane attack complex inhibition factor</fullName>
        <shortName>MACIF</shortName>
    </alternativeName>
    <alternativeName>
        <fullName>Protectin</fullName>
    </alternativeName>
    <cdAntigenName>CD59</cdAntigenName>
</protein>
<comment type="function">
    <text evidence="1">Potent inhibitor of the complement membrane attack complex (MAC) action, which protects self-cells from damage during complement activation. Acts by binding to the beta-haipins of C8 (C8A and C8B) components of the assembling MAC, forming an intermolecular beta-sheet that prevents incorporation of the multiple copies of C9 required for complete formation of the osmolytic pore.</text>
</comment>
<comment type="subunit">
    <text evidence="1">Interacts with T-cell surface antigen CD2.</text>
</comment>
<comment type="subcellular location">
    <subcellularLocation>
        <location evidence="1">Cell membrane</location>
        <topology evidence="1">Lipid-anchor</topology>
        <topology evidence="1">GPI-anchor</topology>
    </subcellularLocation>
    <subcellularLocation>
        <location evidence="1">Secreted</location>
    </subcellularLocation>
    <text evidence="1">Localizes to the cell surface. Soluble form found in a number of tissues.</text>
</comment>
<comment type="PTM">
    <text evidence="1">N- and O-glycosylated.</text>
</comment>
<feature type="signal peptide" evidence="1">
    <location>
        <begin position="1"/>
        <end position="25"/>
    </location>
</feature>
<feature type="chain" id="PRO_0000036126" description="CD59 glycoprotein">
    <location>
        <begin position="26"/>
        <end position="105"/>
    </location>
</feature>
<feature type="propeptide" id="PRO_0000036127" description="Removed in mature form" evidence="1">
    <location>
        <begin position="106"/>
        <end position="131"/>
    </location>
</feature>
<feature type="domain" description="UPAR/Ly6">
    <location>
        <begin position="26"/>
        <end position="111"/>
    </location>
</feature>
<feature type="lipid moiety-binding region" description="GPI-anchor amidated asparagine" evidence="1">
    <location>
        <position position="105"/>
    </location>
</feature>
<feature type="glycosylation site" description="N-linked (GlcNAc...) asparagine" evidence="2">
    <location>
        <position position="46"/>
    </location>
</feature>
<feature type="disulfide bond" evidence="1">
    <location>
        <begin position="28"/>
        <end position="54"/>
    </location>
</feature>
<feature type="disulfide bond" evidence="1">
    <location>
        <begin position="31"/>
        <end position="41"/>
    </location>
</feature>
<feature type="disulfide bond" evidence="1">
    <location>
        <begin position="47"/>
        <end position="67"/>
    </location>
</feature>
<feature type="disulfide bond" evidence="1">
    <location>
        <begin position="73"/>
        <end position="91"/>
    </location>
</feature>
<feature type="disulfide bond" evidence="1">
    <location>
        <begin position="92"/>
        <end position="97"/>
    </location>
</feature>
<sequence length="131" mass="14355">MGIQGGSVLFGLLLVLAVFCHSGNSLQCYSCPLPTMESMECTASTNCTSNLDSCLIAKAGSGVYYRCWKFDDCSFKRISNQLSETQLKYHCCKKNLCNVKEVLENGGTTLSKKTILLLVTPFLAAAWSRHP</sequence>
<gene>
    <name type="primary">CD59</name>
</gene>
<name>CD59_SAISC</name>
<reference key="1">
    <citation type="journal article" date="1994" name="J. Virol.">
        <title>Inhibition of complement-mediated cytolysis by the terminal complement inhibitor of herpesvirus saimiri.</title>
        <authorList>
            <person name="Rother R.P."/>
            <person name="Rollins S.A."/>
            <person name="Fodor W.L."/>
            <person name="Albrecht J.-C."/>
            <person name="Setter E."/>
            <person name="Fleckenstein B."/>
            <person name="Squinto S.P."/>
        </authorList>
    </citation>
    <scope>NUCLEOTIDE SEQUENCE [MRNA]</scope>
    <source>
        <tissue>Lung</tissue>
    </source>
</reference>
<dbReference type="EMBL" id="L22859">
    <property type="protein sequence ID" value="AAA16747.1"/>
    <property type="molecule type" value="mRNA"/>
</dbReference>
<dbReference type="PIR" id="I56894">
    <property type="entry name" value="I56894"/>
</dbReference>
<dbReference type="SMR" id="P47777"/>
<dbReference type="GlyCosmos" id="P47777">
    <property type="glycosylation" value="1 site, No reported glycans"/>
</dbReference>
<dbReference type="GO" id="GO:0005886">
    <property type="term" value="C:plasma membrane"/>
    <property type="evidence" value="ECO:0007669"/>
    <property type="project" value="UniProtKB-SubCell"/>
</dbReference>
<dbReference type="GO" id="GO:0098552">
    <property type="term" value="C:side of membrane"/>
    <property type="evidence" value="ECO:0007669"/>
    <property type="project" value="UniProtKB-KW"/>
</dbReference>
<dbReference type="GO" id="GO:0001848">
    <property type="term" value="F:complement binding"/>
    <property type="evidence" value="ECO:0007669"/>
    <property type="project" value="TreeGrafter"/>
</dbReference>
<dbReference type="GO" id="GO:0001971">
    <property type="term" value="P:negative regulation of activation of membrane attack complex"/>
    <property type="evidence" value="ECO:0007669"/>
    <property type="project" value="TreeGrafter"/>
</dbReference>
<dbReference type="CDD" id="cd23554">
    <property type="entry name" value="TFP_LU_ECD_CD59"/>
    <property type="match status" value="1"/>
</dbReference>
<dbReference type="Gene3D" id="2.10.60.10">
    <property type="entry name" value="CD59"/>
    <property type="match status" value="1"/>
</dbReference>
<dbReference type="InterPro" id="IPR056949">
    <property type="entry name" value="CD59"/>
</dbReference>
<dbReference type="InterPro" id="IPR016054">
    <property type="entry name" value="LY6_UPA_recep-like"/>
</dbReference>
<dbReference type="InterPro" id="IPR045860">
    <property type="entry name" value="Snake_toxin-like_sf"/>
</dbReference>
<dbReference type="PANTHER" id="PTHR10036">
    <property type="entry name" value="CD59 GLYCOPROTEIN"/>
    <property type="match status" value="1"/>
</dbReference>
<dbReference type="PANTHER" id="PTHR10036:SF24">
    <property type="entry name" value="CD59 GLYCOPROTEIN"/>
    <property type="match status" value="1"/>
</dbReference>
<dbReference type="Pfam" id="PF25152">
    <property type="entry name" value="CD59"/>
    <property type="match status" value="1"/>
</dbReference>
<dbReference type="SMART" id="SM00134">
    <property type="entry name" value="LU"/>
    <property type="match status" value="1"/>
</dbReference>
<dbReference type="SUPFAM" id="SSF57302">
    <property type="entry name" value="Snake toxin-like"/>
    <property type="match status" value="1"/>
</dbReference>
<organism>
    <name type="scientific">Saimiri sciureus</name>
    <name type="common">Common squirrel monkey</name>
    <dbReference type="NCBI Taxonomy" id="9521"/>
    <lineage>
        <taxon>Eukaryota</taxon>
        <taxon>Metazoa</taxon>
        <taxon>Chordata</taxon>
        <taxon>Craniata</taxon>
        <taxon>Vertebrata</taxon>
        <taxon>Euteleostomi</taxon>
        <taxon>Mammalia</taxon>
        <taxon>Eutheria</taxon>
        <taxon>Euarchontoglires</taxon>
        <taxon>Primates</taxon>
        <taxon>Haplorrhini</taxon>
        <taxon>Platyrrhini</taxon>
        <taxon>Cebidae</taxon>
        <taxon>Saimiriinae</taxon>
        <taxon>Saimiri</taxon>
    </lineage>
</organism>
<accession>P47777</accession>
<evidence type="ECO:0000250" key="1">
    <source>
        <dbReference type="UniProtKB" id="P13987"/>
    </source>
</evidence>
<evidence type="ECO:0000255" key="2"/>
<keyword id="KW-1003">Cell membrane</keyword>
<keyword id="KW-1015">Disulfide bond</keyword>
<keyword id="KW-0325">Glycoprotein</keyword>
<keyword id="KW-0336">GPI-anchor</keyword>
<keyword id="KW-0449">Lipoprotein</keyword>
<keyword id="KW-0472">Membrane</keyword>
<keyword id="KW-0964">Secreted</keyword>
<keyword id="KW-0732">Signal</keyword>